<proteinExistence type="inferred from homology"/>
<evidence type="ECO:0000255" key="1">
    <source>
        <dbReference type="HAMAP-Rule" id="MF_00150"/>
    </source>
</evidence>
<dbReference type="EC" id="1.2.1.38" evidence="1"/>
<dbReference type="EMBL" id="CP000447">
    <property type="protein sequence ID" value="ABI70054.1"/>
    <property type="molecule type" value="Genomic_DNA"/>
</dbReference>
<dbReference type="RefSeq" id="WP_011635681.1">
    <property type="nucleotide sequence ID" value="NC_008345.1"/>
</dbReference>
<dbReference type="SMR" id="Q089L1"/>
<dbReference type="STRING" id="318167.Sfri_0191"/>
<dbReference type="KEGG" id="sfr:Sfri_0191"/>
<dbReference type="eggNOG" id="COG0002">
    <property type="taxonomic scope" value="Bacteria"/>
</dbReference>
<dbReference type="HOGENOM" id="CLU_006384_0_1_6"/>
<dbReference type="OrthoDB" id="9801289at2"/>
<dbReference type="UniPathway" id="UPA00068">
    <property type="reaction ID" value="UER00108"/>
</dbReference>
<dbReference type="Proteomes" id="UP000000684">
    <property type="component" value="Chromosome"/>
</dbReference>
<dbReference type="GO" id="GO:0005737">
    <property type="term" value="C:cytoplasm"/>
    <property type="evidence" value="ECO:0007669"/>
    <property type="project" value="UniProtKB-SubCell"/>
</dbReference>
<dbReference type="GO" id="GO:0003942">
    <property type="term" value="F:N-acetyl-gamma-glutamyl-phosphate reductase activity"/>
    <property type="evidence" value="ECO:0007669"/>
    <property type="project" value="UniProtKB-UniRule"/>
</dbReference>
<dbReference type="GO" id="GO:0051287">
    <property type="term" value="F:NAD binding"/>
    <property type="evidence" value="ECO:0007669"/>
    <property type="project" value="InterPro"/>
</dbReference>
<dbReference type="GO" id="GO:0070401">
    <property type="term" value="F:NADP+ binding"/>
    <property type="evidence" value="ECO:0007669"/>
    <property type="project" value="InterPro"/>
</dbReference>
<dbReference type="GO" id="GO:0006526">
    <property type="term" value="P:L-arginine biosynthetic process"/>
    <property type="evidence" value="ECO:0007669"/>
    <property type="project" value="UniProtKB-UniRule"/>
</dbReference>
<dbReference type="CDD" id="cd23934">
    <property type="entry name" value="AGPR_1_C"/>
    <property type="match status" value="1"/>
</dbReference>
<dbReference type="CDD" id="cd17895">
    <property type="entry name" value="AGPR_1_N"/>
    <property type="match status" value="1"/>
</dbReference>
<dbReference type="FunFam" id="3.30.360.10:FF:000014">
    <property type="entry name" value="N-acetyl-gamma-glutamyl-phosphate reductase"/>
    <property type="match status" value="1"/>
</dbReference>
<dbReference type="Gene3D" id="3.30.360.10">
    <property type="entry name" value="Dihydrodipicolinate Reductase, domain 2"/>
    <property type="match status" value="1"/>
</dbReference>
<dbReference type="Gene3D" id="3.40.50.720">
    <property type="entry name" value="NAD(P)-binding Rossmann-like Domain"/>
    <property type="match status" value="1"/>
</dbReference>
<dbReference type="HAMAP" id="MF_00150">
    <property type="entry name" value="ArgC_type1"/>
    <property type="match status" value="1"/>
</dbReference>
<dbReference type="InterPro" id="IPR023013">
    <property type="entry name" value="AGPR_AS"/>
</dbReference>
<dbReference type="InterPro" id="IPR000706">
    <property type="entry name" value="AGPR_type-1"/>
</dbReference>
<dbReference type="InterPro" id="IPR036291">
    <property type="entry name" value="NAD(P)-bd_dom_sf"/>
</dbReference>
<dbReference type="InterPro" id="IPR050085">
    <property type="entry name" value="NAGSA_dehydrogenase"/>
</dbReference>
<dbReference type="InterPro" id="IPR000534">
    <property type="entry name" value="Semialdehyde_DH_NAD-bd"/>
</dbReference>
<dbReference type="NCBIfam" id="TIGR01850">
    <property type="entry name" value="argC"/>
    <property type="match status" value="1"/>
</dbReference>
<dbReference type="PANTHER" id="PTHR32338:SF10">
    <property type="entry name" value="N-ACETYL-GAMMA-GLUTAMYL-PHOSPHATE REDUCTASE, CHLOROPLASTIC-RELATED"/>
    <property type="match status" value="1"/>
</dbReference>
<dbReference type="PANTHER" id="PTHR32338">
    <property type="entry name" value="N-ACETYL-GAMMA-GLUTAMYL-PHOSPHATE REDUCTASE, CHLOROPLASTIC-RELATED-RELATED"/>
    <property type="match status" value="1"/>
</dbReference>
<dbReference type="Pfam" id="PF01118">
    <property type="entry name" value="Semialdhyde_dh"/>
    <property type="match status" value="1"/>
</dbReference>
<dbReference type="Pfam" id="PF22698">
    <property type="entry name" value="Semialdhyde_dhC_1"/>
    <property type="match status" value="1"/>
</dbReference>
<dbReference type="SMART" id="SM00859">
    <property type="entry name" value="Semialdhyde_dh"/>
    <property type="match status" value="1"/>
</dbReference>
<dbReference type="SUPFAM" id="SSF55347">
    <property type="entry name" value="Glyceraldehyde-3-phosphate dehydrogenase-like, C-terminal domain"/>
    <property type="match status" value="1"/>
</dbReference>
<dbReference type="SUPFAM" id="SSF51735">
    <property type="entry name" value="NAD(P)-binding Rossmann-fold domains"/>
    <property type="match status" value="1"/>
</dbReference>
<dbReference type="PROSITE" id="PS01224">
    <property type="entry name" value="ARGC"/>
    <property type="match status" value="1"/>
</dbReference>
<gene>
    <name evidence="1" type="primary">argC</name>
    <name type="ordered locus">Sfri_0191</name>
</gene>
<comment type="function">
    <text evidence="1">Catalyzes the NADPH-dependent reduction of N-acetyl-5-glutamyl phosphate to yield N-acetyl-L-glutamate 5-semialdehyde.</text>
</comment>
<comment type="catalytic activity">
    <reaction evidence="1">
        <text>N-acetyl-L-glutamate 5-semialdehyde + phosphate + NADP(+) = N-acetyl-L-glutamyl 5-phosphate + NADPH + H(+)</text>
        <dbReference type="Rhea" id="RHEA:21588"/>
        <dbReference type="ChEBI" id="CHEBI:15378"/>
        <dbReference type="ChEBI" id="CHEBI:29123"/>
        <dbReference type="ChEBI" id="CHEBI:43474"/>
        <dbReference type="ChEBI" id="CHEBI:57783"/>
        <dbReference type="ChEBI" id="CHEBI:57936"/>
        <dbReference type="ChEBI" id="CHEBI:58349"/>
        <dbReference type="EC" id="1.2.1.38"/>
    </reaction>
</comment>
<comment type="pathway">
    <text evidence="1">Amino-acid biosynthesis; L-arginine biosynthesis; N(2)-acetyl-L-ornithine from L-glutamate: step 3/4.</text>
</comment>
<comment type="subcellular location">
    <subcellularLocation>
        <location evidence="1">Cytoplasm</location>
    </subcellularLocation>
</comment>
<comment type="similarity">
    <text evidence="1">Belongs to the NAGSA dehydrogenase family. Type 1 subfamily.</text>
</comment>
<accession>Q089L1</accession>
<organism>
    <name type="scientific">Shewanella frigidimarina (strain NCIMB 400)</name>
    <dbReference type="NCBI Taxonomy" id="318167"/>
    <lineage>
        <taxon>Bacteria</taxon>
        <taxon>Pseudomonadati</taxon>
        <taxon>Pseudomonadota</taxon>
        <taxon>Gammaproteobacteria</taxon>
        <taxon>Alteromonadales</taxon>
        <taxon>Shewanellaceae</taxon>
        <taxon>Shewanella</taxon>
    </lineage>
</organism>
<name>ARGC_SHEFN</name>
<protein>
    <recommendedName>
        <fullName evidence="1">N-acetyl-gamma-glutamyl-phosphate reductase</fullName>
        <shortName evidence="1">AGPR</shortName>
        <ecNumber evidence="1">1.2.1.38</ecNumber>
    </recommendedName>
    <alternativeName>
        <fullName evidence="1">N-acetyl-glutamate semialdehyde dehydrogenase</fullName>
        <shortName evidence="1">NAGSA dehydrogenase</shortName>
    </alternativeName>
</protein>
<sequence length="326" mass="35398">MKSIAIIGASGYTGAQITSLINADCNFSVQGLYVSENSLDKGRKLADLYPTYSHMAYTLSPLSDDAKKKIVAEADAVVLATEHSVSLELAAWFYQQGLAVFDLSGAYRFADVAQYPKWYGFEHTHPDVLAQAVYGLAEWNSEQIKQTRMIAVPGCYPTASLTALKPLKPFLTEMYPVINAVSGVTGAGRKAQLHTSFCEVSLTPYGVLGHRHQPEIATHLGQEVIFTPHLGNFKRGILATITVQLKPGTTEADVAKAYSVYDNAPIVTVKHNQFPKVDDVVNTPNCHLGWKYDANSGYLVVASAIDNLMKGAASQGLQCIKIHFGV</sequence>
<reference key="1">
    <citation type="submission" date="2006-08" db="EMBL/GenBank/DDBJ databases">
        <title>Complete sequence of Shewanella frigidimarina NCIMB 400.</title>
        <authorList>
            <consortium name="US DOE Joint Genome Institute"/>
            <person name="Copeland A."/>
            <person name="Lucas S."/>
            <person name="Lapidus A."/>
            <person name="Barry K."/>
            <person name="Detter J.C."/>
            <person name="Glavina del Rio T."/>
            <person name="Hammon N."/>
            <person name="Israni S."/>
            <person name="Dalin E."/>
            <person name="Tice H."/>
            <person name="Pitluck S."/>
            <person name="Fredrickson J.K."/>
            <person name="Kolker E."/>
            <person name="McCuel L.A."/>
            <person name="DiChristina T."/>
            <person name="Nealson K.H."/>
            <person name="Newman D."/>
            <person name="Tiedje J.M."/>
            <person name="Zhou J."/>
            <person name="Romine M.F."/>
            <person name="Culley D.E."/>
            <person name="Serres M."/>
            <person name="Chertkov O."/>
            <person name="Brettin T."/>
            <person name="Bruce D."/>
            <person name="Han C."/>
            <person name="Tapia R."/>
            <person name="Gilna P."/>
            <person name="Schmutz J."/>
            <person name="Larimer F."/>
            <person name="Land M."/>
            <person name="Hauser L."/>
            <person name="Kyrpides N."/>
            <person name="Mikhailova N."/>
            <person name="Richardson P."/>
        </authorList>
    </citation>
    <scope>NUCLEOTIDE SEQUENCE [LARGE SCALE GENOMIC DNA]</scope>
    <source>
        <strain>NCIMB 400</strain>
    </source>
</reference>
<keyword id="KW-0028">Amino-acid biosynthesis</keyword>
<keyword id="KW-0055">Arginine biosynthesis</keyword>
<keyword id="KW-0963">Cytoplasm</keyword>
<keyword id="KW-0521">NADP</keyword>
<keyword id="KW-0560">Oxidoreductase</keyword>
<keyword id="KW-1185">Reference proteome</keyword>
<feature type="chain" id="PRO_1000011059" description="N-acetyl-gamma-glutamyl-phosphate reductase">
    <location>
        <begin position="1"/>
        <end position="326"/>
    </location>
</feature>
<feature type="active site" evidence="1">
    <location>
        <position position="155"/>
    </location>
</feature>